<comment type="function">
    <text evidence="1">Forms part of the ribosomal stalk which helps the ribosome interact with GTP-bound translation factors. Is thus essential for accurate translation.</text>
</comment>
<comment type="subunit">
    <text evidence="1">Homodimer. Part of the ribosomal stalk of the 50S ribosomal subunit. Forms a multimeric L10(L12)X complex, where L10 forms an elongated spine to which 2 to 4 L12 dimers bind in a sequential fashion. Binds GTP-bound translation factors.</text>
</comment>
<comment type="similarity">
    <text evidence="1">Belongs to the bacterial ribosomal protein bL12 family.</text>
</comment>
<accession>C5CKF2</accession>
<reference key="1">
    <citation type="journal article" date="2011" name="J. Bacteriol.">
        <title>Complete genome sequence of the metabolically versatile plant growth-promoting endophyte, Variovorax paradoxus S110.</title>
        <authorList>
            <person name="Han J.I."/>
            <person name="Choi H.K."/>
            <person name="Lee S.W."/>
            <person name="Orwin P.M."/>
            <person name="Kim J."/>
            <person name="Laroe S.L."/>
            <person name="Kim T.G."/>
            <person name="O'Neil J."/>
            <person name="Leadbetter J.R."/>
            <person name="Lee S.Y."/>
            <person name="Hur C.G."/>
            <person name="Spain J.C."/>
            <person name="Ovchinnikova G."/>
            <person name="Goodwin L."/>
            <person name="Han C."/>
        </authorList>
    </citation>
    <scope>NUCLEOTIDE SEQUENCE [LARGE SCALE GENOMIC DNA]</scope>
    <source>
        <strain>S110</strain>
    </source>
</reference>
<organism>
    <name type="scientific">Variovorax paradoxus (strain S110)</name>
    <dbReference type="NCBI Taxonomy" id="543728"/>
    <lineage>
        <taxon>Bacteria</taxon>
        <taxon>Pseudomonadati</taxon>
        <taxon>Pseudomonadota</taxon>
        <taxon>Betaproteobacteria</taxon>
        <taxon>Burkholderiales</taxon>
        <taxon>Comamonadaceae</taxon>
        <taxon>Variovorax</taxon>
    </lineage>
</organism>
<name>RL7_VARPS</name>
<feature type="chain" id="PRO_1000205572" description="Large ribosomal subunit protein bL12">
    <location>
        <begin position="1"/>
        <end position="125"/>
    </location>
</feature>
<dbReference type="EMBL" id="CP001635">
    <property type="protein sequence ID" value="ACS17250.1"/>
    <property type="molecule type" value="Genomic_DNA"/>
</dbReference>
<dbReference type="SMR" id="C5CKF2"/>
<dbReference type="STRING" id="543728.Vapar_0587"/>
<dbReference type="KEGG" id="vap:Vapar_0587"/>
<dbReference type="eggNOG" id="COG0222">
    <property type="taxonomic scope" value="Bacteria"/>
</dbReference>
<dbReference type="HOGENOM" id="CLU_086499_3_2_4"/>
<dbReference type="OrthoDB" id="9811748at2"/>
<dbReference type="GO" id="GO:0022625">
    <property type="term" value="C:cytosolic large ribosomal subunit"/>
    <property type="evidence" value="ECO:0007669"/>
    <property type="project" value="TreeGrafter"/>
</dbReference>
<dbReference type="GO" id="GO:0003729">
    <property type="term" value="F:mRNA binding"/>
    <property type="evidence" value="ECO:0007669"/>
    <property type="project" value="TreeGrafter"/>
</dbReference>
<dbReference type="GO" id="GO:0003735">
    <property type="term" value="F:structural constituent of ribosome"/>
    <property type="evidence" value="ECO:0007669"/>
    <property type="project" value="InterPro"/>
</dbReference>
<dbReference type="GO" id="GO:0006412">
    <property type="term" value="P:translation"/>
    <property type="evidence" value="ECO:0007669"/>
    <property type="project" value="UniProtKB-UniRule"/>
</dbReference>
<dbReference type="CDD" id="cd00387">
    <property type="entry name" value="Ribosomal_L7_L12"/>
    <property type="match status" value="1"/>
</dbReference>
<dbReference type="FunFam" id="3.30.1390.10:FF:000001">
    <property type="entry name" value="50S ribosomal protein L7/L12"/>
    <property type="match status" value="1"/>
</dbReference>
<dbReference type="Gene3D" id="3.30.1390.10">
    <property type="match status" value="1"/>
</dbReference>
<dbReference type="Gene3D" id="1.20.5.710">
    <property type="entry name" value="Single helix bin"/>
    <property type="match status" value="1"/>
</dbReference>
<dbReference type="HAMAP" id="MF_00368">
    <property type="entry name" value="Ribosomal_bL12"/>
    <property type="match status" value="1"/>
</dbReference>
<dbReference type="InterPro" id="IPR000206">
    <property type="entry name" value="Ribosomal_bL12"/>
</dbReference>
<dbReference type="InterPro" id="IPR013823">
    <property type="entry name" value="Ribosomal_bL12_C"/>
</dbReference>
<dbReference type="InterPro" id="IPR014719">
    <property type="entry name" value="Ribosomal_bL12_C/ClpS-like"/>
</dbReference>
<dbReference type="InterPro" id="IPR008932">
    <property type="entry name" value="Ribosomal_bL12_oligo"/>
</dbReference>
<dbReference type="InterPro" id="IPR036235">
    <property type="entry name" value="Ribosomal_bL12_oligo_N_sf"/>
</dbReference>
<dbReference type="NCBIfam" id="TIGR00855">
    <property type="entry name" value="L12"/>
    <property type="match status" value="1"/>
</dbReference>
<dbReference type="PANTHER" id="PTHR45987">
    <property type="entry name" value="39S RIBOSOMAL PROTEIN L12"/>
    <property type="match status" value="1"/>
</dbReference>
<dbReference type="PANTHER" id="PTHR45987:SF4">
    <property type="entry name" value="LARGE RIBOSOMAL SUBUNIT PROTEIN BL12M"/>
    <property type="match status" value="1"/>
</dbReference>
<dbReference type="Pfam" id="PF00542">
    <property type="entry name" value="Ribosomal_L12"/>
    <property type="match status" value="1"/>
</dbReference>
<dbReference type="Pfam" id="PF16320">
    <property type="entry name" value="Ribosomal_L12_N"/>
    <property type="match status" value="1"/>
</dbReference>
<dbReference type="SUPFAM" id="SSF54736">
    <property type="entry name" value="ClpS-like"/>
    <property type="match status" value="1"/>
</dbReference>
<dbReference type="SUPFAM" id="SSF48300">
    <property type="entry name" value="Ribosomal protein L7/12, oligomerisation (N-terminal) domain"/>
    <property type="match status" value="1"/>
</dbReference>
<sequence>MAFDKDAFLTALDSMTVLELNDLVKAIEEKFGVSAAAMAAPAGAGGGAAAAVAEEQTEFNVMLMDAGANKVSAIKAVREITGLGLKEAKDLVEAAPKAVKEGLSKADAEAAKKKLEDAGAKVELK</sequence>
<protein>
    <recommendedName>
        <fullName evidence="1">Large ribosomal subunit protein bL12</fullName>
    </recommendedName>
    <alternativeName>
        <fullName evidence="2">50S ribosomal protein L7/L12</fullName>
    </alternativeName>
</protein>
<proteinExistence type="inferred from homology"/>
<evidence type="ECO:0000255" key="1">
    <source>
        <dbReference type="HAMAP-Rule" id="MF_00368"/>
    </source>
</evidence>
<evidence type="ECO:0000305" key="2"/>
<gene>
    <name evidence="1" type="primary">rplL</name>
    <name type="ordered locus">Vapar_0587</name>
</gene>
<keyword id="KW-0687">Ribonucleoprotein</keyword>
<keyword id="KW-0689">Ribosomal protein</keyword>